<name>MUTL_RHOP5</name>
<dbReference type="EMBL" id="CP000463">
    <property type="protein sequence ID" value="ABJ05372.1"/>
    <property type="molecule type" value="Genomic_DNA"/>
</dbReference>
<dbReference type="SMR" id="Q07RR2"/>
<dbReference type="STRING" id="316055.RPE_1420"/>
<dbReference type="KEGG" id="rpe:RPE_1420"/>
<dbReference type="eggNOG" id="COG0323">
    <property type="taxonomic scope" value="Bacteria"/>
</dbReference>
<dbReference type="HOGENOM" id="CLU_004131_4_2_5"/>
<dbReference type="OrthoDB" id="9763467at2"/>
<dbReference type="GO" id="GO:0032300">
    <property type="term" value="C:mismatch repair complex"/>
    <property type="evidence" value="ECO:0007669"/>
    <property type="project" value="InterPro"/>
</dbReference>
<dbReference type="GO" id="GO:0005524">
    <property type="term" value="F:ATP binding"/>
    <property type="evidence" value="ECO:0007669"/>
    <property type="project" value="InterPro"/>
</dbReference>
<dbReference type="GO" id="GO:0016887">
    <property type="term" value="F:ATP hydrolysis activity"/>
    <property type="evidence" value="ECO:0007669"/>
    <property type="project" value="InterPro"/>
</dbReference>
<dbReference type="GO" id="GO:0140664">
    <property type="term" value="F:ATP-dependent DNA damage sensor activity"/>
    <property type="evidence" value="ECO:0007669"/>
    <property type="project" value="InterPro"/>
</dbReference>
<dbReference type="GO" id="GO:0030983">
    <property type="term" value="F:mismatched DNA binding"/>
    <property type="evidence" value="ECO:0007669"/>
    <property type="project" value="InterPro"/>
</dbReference>
<dbReference type="GO" id="GO:0006298">
    <property type="term" value="P:mismatch repair"/>
    <property type="evidence" value="ECO:0007669"/>
    <property type="project" value="UniProtKB-UniRule"/>
</dbReference>
<dbReference type="CDD" id="cd16926">
    <property type="entry name" value="HATPase_MutL-MLH-PMS-like"/>
    <property type="match status" value="1"/>
</dbReference>
<dbReference type="CDD" id="cd00782">
    <property type="entry name" value="MutL_Trans"/>
    <property type="match status" value="1"/>
</dbReference>
<dbReference type="FunFam" id="3.30.565.10:FF:000003">
    <property type="entry name" value="DNA mismatch repair endonuclease MutL"/>
    <property type="match status" value="1"/>
</dbReference>
<dbReference type="Gene3D" id="3.30.230.10">
    <property type="match status" value="1"/>
</dbReference>
<dbReference type="Gene3D" id="3.30.565.10">
    <property type="entry name" value="Histidine kinase-like ATPase, C-terminal domain"/>
    <property type="match status" value="1"/>
</dbReference>
<dbReference type="Gene3D" id="3.30.1540.20">
    <property type="entry name" value="MutL, C-terminal domain, dimerisation subdomain"/>
    <property type="match status" value="1"/>
</dbReference>
<dbReference type="Gene3D" id="3.30.1370.100">
    <property type="entry name" value="MutL, C-terminal domain, regulatory subdomain"/>
    <property type="match status" value="1"/>
</dbReference>
<dbReference type="HAMAP" id="MF_00149">
    <property type="entry name" value="DNA_mis_repair"/>
    <property type="match status" value="1"/>
</dbReference>
<dbReference type="InterPro" id="IPR014762">
    <property type="entry name" value="DNA_mismatch_repair_CS"/>
</dbReference>
<dbReference type="InterPro" id="IPR020667">
    <property type="entry name" value="DNA_mismatch_repair_MutL"/>
</dbReference>
<dbReference type="InterPro" id="IPR013507">
    <property type="entry name" value="DNA_mismatch_S5_2-like"/>
</dbReference>
<dbReference type="InterPro" id="IPR036890">
    <property type="entry name" value="HATPase_C_sf"/>
</dbReference>
<dbReference type="InterPro" id="IPR002099">
    <property type="entry name" value="MutL/Mlh/PMS"/>
</dbReference>
<dbReference type="InterPro" id="IPR038973">
    <property type="entry name" value="MutL/Mlh/Pms-like"/>
</dbReference>
<dbReference type="InterPro" id="IPR014790">
    <property type="entry name" value="MutL_C"/>
</dbReference>
<dbReference type="InterPro" id="IPR042120">
    <property type="entry name" value="MutL_C_dimsub"/>
</dbReference>
<dbReference type="InterPro" id="IPR042121">
    <property type="entry name" value="MutL_C_regsub"/>
</dbReference>
<dbReference type="InterPro" id="IPR037198">
    <property type="entry name" value="MutL_C_sf"/>
</dbReference>
<dbReference type="InterPro" id="IPR020568">
    <property type="entry name" value="Ribosomal_Su5_D2-typ_SF"/>
</dbReference>
<dbReference type="InterPro" id="IPR014721">
    <property type="entry name" value="Ribsml_uS5_D2-typ_fold_subgr"/>
</dbReference>
<dbReference type="NCBIfam" id="TIGR00585">
    <property type="entry name" value="mutl"/>
    <property type="match status" value="1"/>
</dbReference>
<dbReference type="NCBIfam" id="NF000953">
    <property type="entry name" value="PRK00095.2-4"/>
    <property type="match status" value="1"/>
</dbReference>
<dbReference type="PANTHER" id="PTHR10073">
    <property type="entry name" value="DNA MISMATCH REPAIR PROTEIN MLH, PMS, MUTL"/>
    <property type="match status" value="1"/>
</dbReference>
<dbReference type="PANTHER" id="PTHR10073:SF12">
    <property type="entry name" value="DNA MISMATCH REPAIR PROTEIN MLH1"/>
    <property type="match status" value="1"/>
</dbReference>
<dbReference type="Pfam" id="PF01119">
    <property type="entry name" value="DNA_mis_repair"/>
    <property type="match status" value="1"/>
</dbReference>
<dbReference type="Pfam" id="PF13589">
    <property type="entry name" value="HATPase_c_3"/>
    <property type="match status" value="1"/>
</dbReference>
<dbReference type="Pfam" id="PF08676">
    <property type="entry name" value="MutL_C"/>
    <property type="match status" value="1"/>
</dbReference>
<dbReference type="SMART" id="SM01340">
    <property type="entry name" value="DNA_mis_repair"/>
    <property type="match status" value="1"/>
</dbReference>
<dbReference type="SMART" id="SM00853">
    <property type="entry name" value="MutL_C"/>
    <property type="match status" value="1"/>
</dbReference>
<dbReference type="SUPFAM" id="SSF55874">
    <property type="entry name" value="ATPase domain of HSP90 chaperone/DNA topoisomerase II/histidine kinase"/>
    <property type="match status" value="1"/>
</dbReference>
<dbReference type="SUPFAM" id="SSF118116">
    <property type="entry name" value="DNA mismatch repair protein MutL"/>
    <property type="match status" value="1"/>
</dbReference>
<dbReference type="SUPFAM" id="SSF54211">
    <property type="entry name" value="Ribosomal protein S5 domain 2-like"/>
    <property type="match status" value="1"/>
</dbReference>
<dbReference type="PROSITE" id="PS00058">
    <property type="entry name" value="DNA_MISMATCH_REPAIR_1"/>
    <property type="match status" value="1"/>
</dbReference>
<reference key="1">
    <citation type="submission" date="2006-09" db="EMBL/GenBank/DDBJ databases">
        <title>Complete sequence of Rhodopseudomonas palustris BisA53.</title>
        <authorList>
            <consortium name="US DOE Joint Genome Institute"/>
            <person name="Copeland A."/>
            <person name="Lucas S."/>
            <person name="Lapidus A."/>
            <person name="Barry K."/>
            <person name="Detter J.C."/>
            <person name="Glavina del Rio T."/>
            <person name="Hammon N."/>
            <person name="Israni S."/>
            <person name="Dalin E."/>
            <person name="Tice H."/>
            <person name="Pitluck S."/>
            <person name="Chain P."/>
            <person name="Malfatti S."/>
            <person name="Shin M."/>
            <person name="Vergez L."/>
            <person name="Schmutz J."/>
            <person name="Larimer F."/>
            <person name="Land M."/>
            <person name="Hauser L."/>
            <person name="Pelletier D.A."/>
            <person name="Kyrpides N."/>
            <person name="Kim E."/>
            <person name="Harwood C.S."/>
            <person name="Oda Y."/>
            <person name="Richardson P."/>
        </authorList>
    </citation>
    <scope>NUCLEOTIDE SEQUENCE [LARGE SCALE GENOMIC DNA]</scope>
    <source>
        <strain>BisA53</strain>
    </source>
</reference>
<organism>
    <name type="scientific">Rhodopseudomonas palustris (strain BisA53)</name>
    <dbReference type="NCBI Taxonomy" id="316055"/>
    <lineage>
        <taxon>Bacteria</taxon>
        <taxon>Pseudomonadati</taxon>
        <taxon>Pseudomonadota</taxon>
        <taxon>Alphaproteobacteria</taxon>
        <taxon>Hyphomicrobiales</taxon>
        <taxon>Nitrobacteraceae</taxon>
        <taxon>Rhodopseudomonas</taxon>
    </lineage>
</organism>
<protein>
    <recommendedName>
        <fullName evidence="1">DNA mismatch repair protein MutL</fullName>
    </recommendedName>
</protein>
<accession>Q07RR2</accession>
<gene>
    <name evidence="1" type="primary">mutL</name>
    <name type="ordered locus">RPE_1420</name>
</gene>
<comment type="function">
    <text evidence="1">This protein is involved in the repair of mismatches in DNA. It is required for dam-dependent methyl-directed DNA mismatch repair. May act as a 'molecular matchmaker', a protein that promotes the formation of a stable complex between two or more DNA-binding proteins in an ATP-dependent manner without itself being part of a final effector complex.</text>
</comment>
<comment type="similarity">
    <text evidence="1">Belongs to the DNA mismatch repair MutL/HexB family.</text>
</comment>
<keyword id="KW-0227">DNA damage</keyword>
<keyword id="KW-0234">DNA repair</keyword>
<feature type="chain" id="PRO_1000010063" description="DNA mismatch repair protein MutL">
    <location>
        <begin position="1"/>
        <end position="603"/>
    </location>
</feature>
<sequence length="603" mass="65273">MPVRQLPETIVNRIAAGEVVERPASVVKELVENALDAGANRIEVFSDGGGRRRIAITDDGGGMTRADLELAVDRHATSKLDDEDLLAIRTLGFRGEALPSIGSVAKLSITTRHTEEPHAWALAVEGGTKSPLVPAALSQGTRVEVSDLFYATPARLKFLKTDRTEAEAIREVVRRLAMARPDVAFTLSGEERAPVSWAAVLPGAAGRLTRLSDILGAEFRKSAIEVRSERDGVVVEGFAGAPSLTRANALGQYLFVNGRPVRDRLIIGAVRAAYADYLPRDRHPVLALFVTCDPHEVDANVHPAKTEVRFRDAGLVRALIVHALKDGLSREGQRSAAASVDGATLAAFRPGFAPPPRANWDWRRSPSYPIAGSNAMDMAPGFAEREQAGFDVGLPSADVRNYAAPAAELIDRPLGAARTQIHETYIVAQTRTGLVIVDQHAAHERLVYEKLKASMASNGVQRQLLLIPEIVELDEATVEQLLDRAEELCSFGLAIDSFGPGAVAVREVPALLGKANAASLLRDLAEHMAEWDEALPLERRLLHVAATMACHGSVRAGRILKPEEMNALLREMEATPNSGQCNHGRPTYVELTLSDIEKLFGRR</sequence>
<evidence type="ECO:0000255" key="1">
    <source>
        <dbReference type="HAMAP-Rule" id="MF_00149"/>
    </source>
</evidence>
<proteinExistence type="inferred from homology"/>